<name>GSA_CYTH3</name>
<gene>
    <name evidence="1" type="primary">hemL</name>
    <name type="ordered locus">CHU_0936</name>
</gene>
<reference key="1">
    <citation type="journal article" date="2007" name="Appl. Environ. Microbiol.">
        <title>Genome sequence of the cellulolytic gliding bacterium Cytophaga hutchinsonii.</title>
        <authorList>
            <person name="Xie G."/>
            <person name="Bruce D.C."/>
            <person name="Challacombe J.F."/>
            <person name="Chertkov O."/>
            <person name="Detter J.C."/>
            <person name="Gilna P."/>
            <person name="Han C.S."/>
            <person name="Lucas S."/>
            <person name="Misra M."/>
            <person name="Myers G.L."/>
            <person name="Richardson P."/>
            <person name="Tapia R."/>
            <person name="Thayer N."/>
            <person name="Thompson L.S."/>
            <person name="Brettin T.S."/>
            <person name="Henrissat B."/>
            <person name="Wilson D.B."/>
            <person name="McBride M.J."/>
        </authorList>
    </citation>
    <scope>NUCLEOTIDE SEQUENCE [LARGE SCALE GENOMIC DNA]</scope>
    <source>
        <strain>ATCC 33406 / DSM 1761 / JCM 20678 / CIP 103989 / IAM 12607 / NBRC 15051 / NCIMB 9469 / D465</strain>
    </source>
</reference>
<comment type="catalytic activity">
    <reaction evidence="1">
        <text>(S)-4-amino-5-oxopentanoate = 5-aminolevulinate</text>
        <dbReference type="Rhea" id="RHEA:14265"/>
        <dbReference type="ChEBI" id="CHEBI:57501"/>
        <dbReference type="ChEBI" id="CHEBI:356416"/>
        <dbReference type="EC" id="5.4.3.8"/>
    </reaction>
</comment>
<comment type="cofactor">
    <cofactor evidence="1">
        <name>pyridoxal 5'-phosphate</name>
        <dbReference type="ChEBI" id="CHEBI:597326"/>
    </cofactor>
</comment>
<comment type="pathway">
    <text evidence="1">Porphyrin-containing compound metabolism; protoporphyrin-IX biosynthesis; 5-aminolevulinate from L-glutamyl-tRNA(Glu): step 2/2.</text>
</comment>
<comment type="subunit">
    <text evidence="1">Homodimer.</text>
</comment>
<comment type="subcellular location">
    <subcellularLocation>
        <location evidence="1">Cytoplasm</location>
    </subcellularLocation>
</comment>
<comment type="similarity">
    <text evidence="1">Belongs to the class-III pyridoxal-phosphate-dependent aminotransferase family. HemL subfamily.</text>
</comment>
<organism>
    <name type="scientific">Cytophaga hutchinsonii (strain ATCC 33406 / DSM 1761 / CIP 103989 / NBRC 15051 / NCIMB 9469 / D465)</name>
    <dbReference type="NCBI Taxonomy" id="269798"/>
    <lineage>
        <taxon>Bacteria</taxon>
        <taxon>Pseudomonadati</taxon>
        <taxon>Bacteroidota</taxon>
        <taxon>Cytophagia</taxon>
        <taxon>Cytophagales</taxon>
        <taxon>Cytophagaceae</taxon>
        <taxon>Cytophaga</taxon>
    </lineage>
</organism>
<sequence>MKNKTSAGLFSRAKEVIPGGVNSPVRAFRAVGGNPLFIKRAHGAYLVDEDDNQYIELINSWGPMILGHGNELIEKAVRDALSNSLSFGAPSRKEVEMAELIVSMVPSVEMVRMVNSGTEATMSAIRVARGYTGKEKIIKFEGCYHGHGDSFLIAAGSGAVTMGVPDSPGVPQGVANDTLTAPYNDIEAVRILVEKNKNKIAAIIIEPVAGNMGCVLPKAGFLEALREICDQENIVLIFDEVMSGFRLSVSGAQGVYGVQPDMTTMGKIIGGGMPVGAYGGKKEIMQNVSPSGPIYQAGTLSGNPIAMSAGLAILQYLQASPALYTQLNDQTDYLIHGMRKANNLLGLDYTFNHVGSMFTMFFTNIGVYDFETAKKSDLSKFAAYFQAMLSRGIYLAPSQFESLFISSAITKQLADQIIQAHAESMKEIHN</sequence>
<proteinExistence type="inferred from homology"/>
<dbReference type="EC" id="5.4.3.8" evidence="1"/>
<dbReference type="EMBL" id="CP000383">
    <property type="protein sequence ID" value="ABG58215.1"/>
    <property type="molecule type" value="Genomic_DNA"/>
</dbReference>
<dbReference type="RefSeq" id="WP_011584330.1">
    <property type="nucleotide sequence ID" value="NC_008255.1"/>
</dbReference>
<dbReference type="SMR" id="Q11WK1"/>
<dbReference type="STRING" id="269798.CHU_0936"/>
<dbReference type="KEGG" id="chu:CHU_0936"/>
<dbReference type="eggNOG" id="COG0001">
    <property type="taxonomic scope" value="Bacteria"/>
</dbReference>
<dbReference type="HOGENOM" id="CLU_016922_1_5_10"/>
<dbReference type="OrthoDB" id="9807885at2"/>
<dbReference type="UniPathway" id="UPA00251">
    <property type="reaction ID" value="UER00317"/>
</dbReference>
<dbReference type="Proteomes" id="UP000001822">
    <property type="component" value="Chromosome"/>
</dbReference>
<dbReference type="GO" id="GO:0005737">
    <property type="term" value="C:cytoplasm"/>
    <property type="evidence" value="ECO:0007669"/>
    <property type="project" value="UniProtKB-SubCell"/>
</dbReference>
<dbReference type="GO" id="GO:0042286">
    <property type="term" value="F:glutamate-1-semialdehyde 2,1-aminomutase activity"/>
    <property type="evidence" value="ECO:0007669"/>
    <property type="project" value="UniProtKB-UniRule"/>
</dbReference>
<dbReference type="GO" id="GO:0030170">
    <property type="term" value="F:pyridoxal phosphate binding"/>
    <property type="evidence" value="ECO:0007669"/>
    <property type="project" value="InterPro"/>
</dbReference>
<dbReference type="GO" id="GO:0008483">
    <property type="term" value="F:transaminase activity"/>
    <property type="evidence" value="ECO:0007669"/>
    <property type="project" value="InterPro"/>
</dbReference>
<dbReference type="GO" id="GO:0006782">
    <property type="term" value="P:protoporphyrinogen IX biosynthetic process"/>
    <property type="evidence" value="ECO:0007669"/>
    <property type="project" value="UniProtKB-UniRule"/>
</dbReference>
<dbReference type="CDD" id="cd00610">
    <property type="entry name" value="OAT_like"/>
    <property type="match status" value="1"/>
</dbReference>
<dbReference type="FunFam" id="3.40.640.10:FF:000021">
    <property type="entry name" value="Glutamate-1-semialdehyde 2,1-aminomutase"/>
    <property type="match status" value="1"/>
</dbReference>
<dbReference type="Gene3D" id="3.90.1150.10">
    <property type="entry name" value="Aspartate Aminotransferase, domain 1"/>
    <property type="match status" value="1"/>
</dbReference>
<dbReference type="Gene3D" id="3.40.640.10">
    <property type="entry name" value="Type I PLP-dependent aspartate aminotransferase-like (Major domain)"/>
    <property type="match status" value="1"/>
</dbReference>
<dbReference type="HAMAP" id="MF_00375">
    <property type="entry name" value="HemL_aminotrans_3"/>
    <property type="match status" value="1"/>
</dbReference>
<dbReference type="InterPro" id="IPR004639">
    <property type="entry name" value="4pyrrol_synth_GluAld_NH2Trfase"/>
</dbReference>
<dbReference type="InterPro" id="IPR005814">
    <property type="entry name" value="Aminotrans_3"/>
</dbReference>
<dbReference type="InterPro" id="IPR049704">
    <property type="entry name" value="Aminotrans_3_PPA_site"/>
</dbReference>
<dbReference type="InterPro" id="IPR015424">
    <property type="entry name" value="PyrdxlP-dep_Trfase"/>
</dbReference>
<dbReference type="InterPro" id="IPR015421">
    <property type="entry name" value="PyrdxlP-dep_Trfase_major"/>
</dbReference>
<dbReference type="InterPro" id="IPR015422">
    <property type="entry name" value="PyrdxlP-dep_Trfase_small"/>
</dbReference>
<dbReference type="NCBIfam" id="TIGR00713">
    <property type="entry name" value="hemL"/>
    <property type="match status" value="1"/>
</dbReference>
<dbReference type="NCBIfam" id="NF000818">
    <property type="entry name" value="PRK00062.1"/>
    <property type="match status" value="1"/>
</dbReference>
<dbReference type="PANTHER" id="PTHR43713">
    <property type="entry name" value="GLUTAMATE-1-SEMIALDEHYDE 2,1-AMINOMUTASE"/>
    <property type="match status" value="1"/>
</dbReference>
<dbReference type="PANTHER" id="PTHR43713:SF3">
    <property type="entry name" value="GLUTAMATE-1-SEMIALDEHYDE 2,1-AMINOMUTASE 1, CHLOROPLASTIC-RELATED"/>
    <property type="match status" value="1"/>
</dbReference>
<dbReference type="Pfam" id="PF00202">
    <property type="entry name" value="Aminotran_3"/>
    <property type="match status" value="1"/>
</dbReference>
<dbReference type="SUPFAM" id="SSF53383">
    <property type="entry name" value="PLP-dependent transferases"/>
    <property type="match status" value="1"/>
</dbReference>
<dbReference type="PROSITE" id="PS00600">
    <property type="entry name" value="AA_TRANSFER_CLASS_3"/>
    <property type="match status" value="1"/>
</dbReference>
<evidence type="ECO:0000255" key="1">
    <source>
        <dbReference type="HAMAP-Rule" id="MF_00375"/>
    </source>
</evidence>
<accession>Q11WK1</accession>
<protein>
    <recommendedName>
        <fullName evidence="1">Glutamate-1-semialdehyde 2,1-aminomutase</fullName>
        <shortName evidence="1">GSA</shortName>
        <ecNumber evidence="1">5.4.3.8</ecNumber>
    </recommendedName>
    <alternativeName>
        <fullName evidence="1">Glutamate-1-semialdehyde aminotransferase</fullName>
        <shortName evidence="1">GSA-AT</shortName>
    </alternativeName>
</protein>
<keyword id="KW-0963">Cytoplasm</keyword>
<keyword id="KW-0413">Isomerase</keyword>
<keyword id="KW-0627">Porphyrin biosynthesis</keyword>
<keyword id="KW-0663">Pyridoxal phosphate</keyword>
<keyword id="KW-1185">Reference proteome</keyword>
<feature type="chain" id="PRO_0000300905" description="Glutamate-1-semialdehyde 2,1-aminomutase">
    <location>
        <begin position="1"/>
        <end position="430"/>
    </location>
</feature>
<feature type="modified residue" description="N6-(pyridoxal phosphate)lysine" evidence="1">
    <location>
        <position position="267"/>
    </location>
</feature>